<name>TRPC_LEGPL</name>
<accession>Q5WY75</accession>
<protein>
    <recommendedName>
        <fullName evidence="1">Indole-3-glycerol phosphate synthase</fullName>
        <shortName evidence="1">IGPS</shortName>
        <ecNumber evidence="1">4.1.1.48</ecNumber>
    </recommendedName>
</protein>
<sequence length="258" mass="28990">MNSILERIAKHKLEEVAVAKKNKPLHVLSKQQPGEIRDFITALKSNTSPAVIAEIKKASPSKGLIRKDFNVAEIAKIYTQNGARCLSVLTDIEFFQGHPDYLALAKSKTTLPVLRKDFIIDSYQIYESLVLGADCILLIVALLDDVQLMDFCQLAQELKMSVLVESHTQDELERALRLPTPLIGINNRSLHNFKTDIQLSIQLKQFVPKDKIIITESGINTREDIKLMQSHDINAFLIGESLMRADNIGKALQKLMTD</sequence>
<evidence type="ECO:0000255" key="1">
    <source>
        <dbReference type="HAMAP-Rule" id="MF_00134"/>
    </source>
</evidence>
<gene>
    <name evidence="1" type="primary">trpC</name>
    <name type="ordered locus">lpl0864</name>
</gene>
<reference key="1">
    <citation type="journal article" date="2004" name="Nat. Genet.">
        <title>Evidence in the Legionella pneumophila genome for exploitation of host cell functions and high genome plasticity.</title>
        <authorList>
            <person name="Cazalet C."/>
            <person name="Rusniok C."/>
            <person name="Brueggemann H."/>
            <person name="Zidane N."/>
            <person name="Magnier A."/>
            <person name="Ma L."/>
            <person name="Tichit M."/>
            <person name="Jarraud S."/>
            <person name="Bouchier C."/>
            <person name="Vandenesch F."/>
            <person name="Kunst F."/>
            <person name="Etienne J."/>
            <person name="Glaser P."/>
            <person name="Buchrieser C."/>
        </authorList>
    </citation>
    <scope>NUCLEOTIDE SEQUENCE [LARGE SCALE GENOMIC DNA]</scope>
    <source>
        <strain>Lens</strain>
    </source>
</reference>
<dbReference type="EC" id="4.1.1.48" evidence="1"/>
<dbReference type="EMBL" id="CR628337">
    <property type="protein sequence ID" value="CAH15098.1"/>
    <property type="molecule type" value="Genomic_DNA"/>
</dbReference>
<dbReference type="RefSeq" id="WP_011215021.1">
    <property type="nucleotide sequence ID" value="NC_006369.1"/>
</dbReference>
<dbReference type="SMR" id="Q5WY75"/>
<dbReference type="KEGG" id="lpf:lpl0864"/>
<dbReference type="LegioList" id="lpl0864"/>
<dbReference type="HOGENOM" id="CLU_034247_2_0_6"/>
<dbReference type="UniPathway" id="UPA00035">
    <property type="reaction ID" value="UER00043"/>
</dbReference>
<dbReference type="Proteomes" id="UP000002517">
    <property type="component" value="Chromosome"/>
</dbReference>
<dbReference type="GO" id="GO:0004425">
    <property type="term" value="F:indole-3-glycerol-phosphate synthase activity"/>
    <property type="evidence" value="ECO:0007669"/>
    <property type="project" value="UniProtKB-UniRule"/>
</dbReference>
<dbReference type="GO" id="GO:0004640">
    <property type="term" value="F:phosphoribosylanthranilate isomerase activity"/>
    <property type="evidence" value="ECO:0007669"/>
    <property type="project" value="TreeGrafter"/>
</dbReference>
<dbReference type="GO" id="GO:0000162">
    <property type="term" value="P:L-tryptophan biosynthetic process"/>
    <property type="evidence" value="ECO:0007669"/>
    <property type="project" value="UniProtKB-UniRule"/>
</dbReference>
<dbReference type="CDD" id="cd00331">
    <property type="entry name" value="IGPS"/>
    <property type="match status" value="1"/>
</dbReference>
<dbReference type="FunFam" id="3.20.20.70:FF:000024">
    <property type="entry name" value="Indole-3-glycerol phosphate synthase"/>
    <property type="match status" value="1"/>
</dbReference>
<dbReference type="Gene3D" id="3.20.20.70">
    <property type="entry name" value="Aldolase class I"/>
    <property type="match status" value="1"/>
</dbReference>
<dbReference type="HAMAP" id="MF_00134_B">
    <property type="entry name" value="IGPS_B"/>
    <property type="match status" value="1"/>
</dbReference>
<dbReference type="InterPro" id="IPR013785">
    <property type="entry name" value="Aldolase_TIM"/>
</dbReference>
<dbReference type="InterPro" id="IPR045186">
    <property type="entry name" value="Indole-3-glycerol_P_synth"/>
</dbReference>
<dbReference type="InterPro" id="IPR013798">
    <property type="entry name" value="Indole-3-glycerol_P_synth_dom"/>
</dbReference>
<dbReference type="InterPro" id="IPR001468">
    <property type="entry name" value="Indole-3-GlycerolPSynthase_CS"/>
</dbReference>
<dbReference type="InterPro" id="IPR011060">
    <property type="entry name" value="RibuloseP-bd_barrel"/>
</dbReference>
<dbReference type="NCBIfam" id="NF001373">
    <property type="entry name" value="PRK00278.1-6"/>
    <property type="match status" value="1"/>
</dbReference>
<dbReference type="NCBIfam" id="NF001377">
    <property type="entry name" value="PRK00278.2-4"/>
    <property type="match status" value="1"/>
</dbReference>
<dbReference type="PANTHER" id="PTHR22854:SF2">
    <property type="entry name" value="INDOLE-3-GLYCEROL-PHOSPHATE SYNTHASE"/>
    <property type="match status" value="1"/>
</dbReference>
<dbReference type="PANTHER" id="PTHR22854">
    <property type="entry name" value="TRYPTOPHAN BIOSYNTHESIS PROTEIN"/>
    <property type="match status" value="1"/>
</dbReference>
<dbReference type="Pfam" id="PF00218">
    <property type="entry name" value="IGPS"/>
    <property type="match status" value="1"/>
</dbReference>
<dbReference type="SUPFAM" id="SSF51366">
    <property type="entry name" value="Ribulose-phoshate binding barrel"/>
    <property type="match status" value="1"/>
</dbReference>
<dbReference type="PROSITE" id="PS00614">
    <property type="entry name" value="IGPS"/>
    <property type="match status" value="1"/>
</dbReference>
<feature type="chain" id="PRO_1000018493" description="Indole-3-glycerol phosphate synthase">
    <location>
        <begin position="1"/>
        <end position="258"/>
    </location>
</feature>
<comment type="catalytic activity">
    <reaction evidence="1">
        <text>1-(2-carboxyphenylamino)-1-deoxy-D-ribulose 5-phosphate + H(+) = (1S,2R)-1-C-(indol-3-yl)glycerol 3-phosphate + CO2 + H2O</text>
        <dbReference type="Rhea" id="RHEA:23476"/>
        <dbReference type="ChEBI" id="CHEBI:15377"/>
        <dbReference type="ChEBI" id="CHEBI:15378"/>
        <dbReference type="ChEBI" id="CHEBI:16526"/>
        <dbReference type="ChEBI" id="CHEBI:58613"/>
        <dbReference type="ChEBI" id="CHEBI:58866"/>
        <dbReference type="EC" id="4.1.1.48"/>
    </reaction>
</comment>
<comment type="pathway">
    <text evidence="1">Amino-acid biosynthesis; L-tryptophan biosynthesis; L-tryptophan from chorismate: step 4/5.</text>
</comment>
<comment type="similarity">
    <text evidence="1">Belongs to the TrpC family.</text>
</comment>
<organism>
    <name type="scientific">Legionella pneumophila (strain Lens)</name>
    <dbReference type="NCBI Taxonomy" id="297245"/>
    <lineage>
        <taxon>Bacteria</taxon>
        <taxon>Pseudomonadati</taxon>
        <taxon>Pseudomonadota</taxon>
        <taxon>Gammaproteobacteria</taxon>
        <taxon>Legionellales</taxon>
        <taxon>Legionellaceae</taxon>
        <taxon>Legionella</taxon>
    </lineage>
</organism>
<keyword id="KW-0028">Amino-acid biosynthesis</keyword>
<keyword id="KW-0057">Aromatic amino acid biosynthesis</keyword>
<keyword id="KW-0210">Decarboxylase</keyword>
<keyword id="KW-0456">Lyase</keyword>
<keyword id="KW-0822">Tryptophan biosynthesis</keyword>
<proteinExistence type="inferred from homology"/>